<organism>
    <name type="scientific">Bacillus thuringiensis subsp. konkukian (strain 97-27)</name>
    <dbReference type="NCBI Taxonomy" id="281309"/>
    <lineage>
        <taxon>Bacteria</taxon>
        <taxon>Bacillati</taxon>
        <taxon>Bacillota</taxon>
        <taxon>Bacilli</taxon>
        <taxon>Bacillales</taxon>
        <taxon>Bacillaceae</taxon>
        <taxon>Bacillus</taxon>
        <taxon>Bacillus cereus group</taxon>
    </lineage>
</organism>
<keyword id="KW-0067">ATP-binding</keyword>
<keyword id="KW-0963">Cytoplasm</keyword>
<keyword id="KW-0347">Helicase</keyword>
<keyword id="KW-0378">Hydrolase</keyword>
<keyword id="KW-0547">Nucleotide-binding</keyword>
<keyword id="KW-0694">RNA-binding</keyword>
<keyword id="KW-0346">Stress response</keyword>
<gene>
    <name evidence="1" type="primary">cshA</name>
    <name type="ordered locus">BT9727_0219</name>
</gene>
<sequence length="528" mass="58944">MTTFRELGLSDSLLQSVESMGFEEATPIQAETIPHALQGKDIIGQAQTGTGKTAAFGLPLLDKVDTHKESVQGIVIAPTRELAIQVGEELYKIGKHKRVRILPIYGGQDINRQIRALKKHPHIIVGTPGRILDHINRKTLRLQNVETVVLDEADEMLNMGFIEDIEAILTDVPETHQTLLFSATMPDPIRRIAERFMTEPQHIKVKAKEVTMPNIQQFYLEVQEKKKFDVLTRLLDIQSPELAIVFGRTKRRVDELSEALNLRGYAAEGIHGDLTQAKRMSVLRKFKEGSIEVLVATDVAARGLDISGVTHVYNFDIPQDPESYVHRIGRTGRAGKKGIAMLFVTPRESGQLKNIERTTKRKMDRMDAPTLDEALEGQQRLIAEKLQSTIENENLAYYKRIAEEMLEENDSVTVVAAALKMMTKEPDTTPIALTSEPPVVSRGGGSKKRGGNGGGYRDGNRNRSRDGRGGDGRNRDRNRDGRNRDGNRDRNREGSRDGNRGRRGEGQGRPGSSNGRGERKHHSRKPQA</sequence>
<evidence type="ECO:0000255" key="1">
    <source>
        <dbReference type="HAMAP-Rule" id="MF_01493"/>
    </source>
</evidence>
<evidence type="ECO:0000256" key="2">
    <source>
        <dbReference type="SAM" id="MobiDB-lite"/>
    </source>
</evidence>
<comment type="function">
    <text evidence="1">DEAD-box RNA helicase possibly involved in RNA degradation. Unwinds dsRNA in both 5'- and 3'-directions, has RNA-dependent ATPase activity.</text>
</comment>
<comment type="catalytic activity">
    <reaction evidence="1">
        <text>ATP + H2O = ADP + phosphate + H(+)</text>
        <dbReference type="Rhea" id="RHEA:13065"/>
        <dbReference type="ChEBI" id="CHEBI:15377"/>
        <dbReference type="ChEBI" id="CHEBI:15378"/>
        <dbReference type="ChEBI" id="CHEBI:30616"/>
        <dbReference type="ChEBI" id="CHEBI:43474"/>
        <dbReference type="ChEBI" id="CHEBI:456216"/>
        <dbReference type="EC" id="3.6.4.13"/>
    </reaction>
</comment>
<comment type="subunit">
    <text evidence="1">Oligomerizes, may be a member of the RNA degradosome.</text>
</comment>
<comment type="subcellular location">
    <subcellularLocation>
        <location evidence="1">Cytoplasm</location>
    </subcellularLocation>
</comment>
<comment type="similarity">
    <text evidence="1">Belongs to the DEAD box helicase family. CshA subfamily.</text>
</comment>
<dbReference type="EC" id="3.6.4.13" evidence="1"/>
<dbReference type="EMBL" id="AE017355">
    <property type="protein sequence ID" value="AAT61332.1"/>
    <property type="molecule type" value="Genomic_DNA"/>
</dbReference>
<dbReference type="RefSeq" id="WP_000206587.1">
    <property type="nucleotide sequence ID" value="NC_005957.1"/>
</dbReference>
<dbReference type="RefSeq" id="YP_034574.1">
    <property type="nucleotide sequence ID" value="NC_005957.1"/>
</dbReference>
<dbReference type="SMR" id="Q6HPE6"/>
<dbReference type="KEGG" id="btk:BT9727_0219"/>
<dbReference type="PATRIC" id="fig|281309.8.peg.235"/>
<dbReference type="HOGENOM" id="CLU_003041_21_0_9"/>
<dbReference type="Proteomes" id="UP000001301">
    <property type="component" value="Chromosome"/>
</dbReference>
<dbReference type="GO" id="GO:0043590">
    <property type="term" value="C:bacterial nucleoid"/>
    <property type="evidence" value="ECO:0000250"/>
    <property type="project" value="UniProtKB"/>
</dbReference>
<dbReference type="GO" id="GO:0005829">
    <property type="term" value="C:cytosol"/>
    <property type="evidence" value="ECO:0007669"/>
    <property type="project" value="TreeGrafter"/>
</dbReference>
<dbReference type="GO" id="GO:0005840">
    <property type="term" value="C:ribosome"/>
    <property type="evidence" value="ECO:0007669"/>
    <property type="project" value="TreeGrafter"/>
</dbReference>
<dbReference type="GO" id="GO:0005524">
    <property type="term" value="F:ATP binding"/>
    <property type="evidence" value="ECO:0000250"/>
    <property type="project" value="UniProtKB"/>
</dbReference>
<dbReference type="GO" id="GO:0016887">
    <property type="term" value="F:ATP hydrolysis activity"/>
    <property type="evidence" value="ECO:0007669"/>
    <property type="project" value="RHEA"/>
</dbReference>
<dbReference type="GO" id="GO:0003723">
    <property type="term" value="F:RNA binding"/>
    <property type="evidence" value="ECO:0000250"/>
    <property type="project" value="UniProtKB"/>
</dbReference>
<dbReference type="GO" id="GO:0003724">
    <property type="term" value="F:RNA helicase activity"/>
    <property type="evidence" value="ECO:0000250"/>
    <property type="project" value="UniProtKB"/>
</dbReference>
<dbReference type="GO" id="GO:0033592">
    <property type="term" value="F:RNA strand annealing activity"/>
    <property type="evidence" value="ECO:0007669"/>
    <property type="project" value="TreeGrafter"/>
</dbReference>
<dbReference type="GO" id="GO:0009409">
    <property type="term" value="P:response to cold"/>
    <property type="evidence" value="ECO:0007669"/>
    <property type="project" value="TreeGrafter"/>
</dbReference>
<dbReference type="GO" id="GO:0006401">
    <property type="term" value="P:RNA catabolic process"/>
    <property type="evidence" value="ECO:0007669"/>
    <property type="project" value="UniProtKB-UniRule"/>
</dbReference>
<dbReference type="CDD" id="cd00268">
    <property type="entry name" value="DEADc"/>
    <property type="match status" value="1"/>
</dbReference>
<dbReference type="CDD" id="cd18787">
    <property type="entry name" value="SF2_C_DEAD"/>
    <property type="match status" value="1"/>
</dbReference>
<dbReference type="FunFam" id="3.40.50.300:FF:000108">
    <property type="entry name" value="ATP-dependent RNA helicase RhlE"/>
    <property type="match status" value="1"/>
</dbReference>
<dbReference type="FunFam" id="3.40.50.300:FF:000783">
    <property type="entry name" value="DEAD-box ATP-dependent RNA helicase CshA"/>
    <property type="match status" value="1"/>
</dbReference>
<dbReference type="Gene3D" id="3.40.50.300">
    <property type="entry name" value="P-loop containing nucleotide triphosphate hydrolases"/>
    <property type="match status" value="2"/>
</dbReference>
<dbReference type="HAMAP" id="MF_01493">
    <property type="entry name" value="DEAD_helicase_CshA"/>
    <property type="match status" value="1"/>
</dbReference>
<dbReference type="InterPro" id="IPR011545">
    <property type="entry name" value="DEAD/DEAH_box_helicase_dom"/>
</dbReference>
<dbReference type="InterPro" id="IPR050547">
    <property type="entry name" value="DEAD_box_RNA_helicases"/>
</dbReference>
<dbReference type="InterPro" id="IPR030880">
    <property type="entry name" value="DEAD_helicase_CshA"/>
</dbReference>
<dbReference type="InterPro" id="IPR014001">
    <property type="entry name" value="Helicase_ATP-bd"/>
</dbReference>
<dbReference type="InterPro" id="IPR001650">
    <property type="entry name" value="Helicase_C-like"/>
</dbReference>
<dbReference type="InterPro" id="IPR027417">
    <property type="entry name" value="P-loop_NTPase"/>
</dbReference>
<dbReference type="InterPro" id="IPR000629">
    <property type="entry name" value="RNA-helicase_DEAD-box_CS"/>
</dbReference>
<dbReference type="InterPro" id="IPR014014">
    <property type="entry name" value="RNA_helicase_DEAD_Q_motif"/>
</dbReference>
<dbReference type="PANTHER" id="PTHR47963">
    <property type="entry name" value="DEAD-BOX ATP-DEPENDENT RNA HELICASE 47, MITOCHONDRIAL"/>
    <property type="match status" value="1"/>
</dbReference>
<dbReference type="PANTHER" id="PTHR47963:SF5">
    <property type="entry name" value="DEAD-BOX ATP-DEPENDENT RNA HELICASE CSHA"/>
    <property type="match status" value="1"/>
</dbReference>
<dbReference type="Pfam" id="PF00270">
    <property type="entry name" value="DEAD"/>
    <property type="match status" value="1"/>
</dbReference>
<dbReference type="Pfam" id="PF25399">
    <property type="entry name" value="DeaD_dimer"/>
    <property type="match status" value="1"/>
</dbReference>
<dbReference type="Pfam" id="PF00271">
    <property type="entry name" value="Helicase_C"/>
    <property type="match status" value="1"/>
</dbReference>
<dbReference type="SMART" id="SM00487">
    <property type="entry name" value="DEXDc"/>
    <property type="match status" value="1"/>
</dbReference>
<dbReference type="SMART" id="SM00490">
    <property type="entry name" value="HELICc"/>
    <property type="match status" value="1"/>
</dbReference>
<dbReference type="SUPFAM" id="SSF52540">
    <property type="entry name" value="P-loop containing nucleoside triphosphate hydrolases"/>
    <property type="match status" value="1"/>
</dbReference>
<dbReference type="PROSITE" id="PS00039">
    <property type="entry name" value="DEAD_ATP_HELICASE"/>
    <property type="match status" value="1"/>
</dbReference>
<dbReference type="PROSITE" id="PS51192">
    <property type="entry name" value="HELICASE_ATP_BIND_1"/>
    <property type="match status" value="1"/>
</dbReference>
<dbReference type="PROSITE" id="PS51194">
    <property type="entry name" value="HELICASE_CTER"/>
    <property type="match status" value="1"/>
</dbReference>
<dbReference type="PROSITE" id="PS51195">
    <property type="entry name" value="Q_MOTIF"/>
    <property type="match status" value="1"/>
</dbReference>
<protein>
    <recommendedName>
        <fullName evidence="1">DEAD-box ATP-dependent RNA helicase CshA</fullName>
        <ecNumber evidence="1">3.6.4.13</ecNumber>
    </recommendedName>
</protein>
<name>CSHA_BACHK</name>
<feature type="chain" id="PRO_0000280056" description="DEAD-box ATP-dependent RNA helicase CshA">
    <location>
        <begin position="1"/>
        <end position="528"/>
    </location>
</feature>
<feature type="domain" description="Helicase ATP-binding" evidence="1">
    <location>
        <begin position="33"/>
        <end position="203"/>
    </location>
</feature>
<feature type="domain" description="Helicase C-terminal" evidence="1">
    <location>
        <begin position="214"/>
        <end position="374"/>
    </location>
</feature>
<feature type="region of interest" description="Disordered" evidence="2">
    <location>
        <begin position="428"/>
        <end position="528"/>
    </location>
</feature>
<feature type="short sequence motif" description="Q motif">
    <location>
        <begin position="2"/>
        <end position="30"/>
    </location>
</feature>
<feature type="short sequence motif" description="DEAD box">
    <location>
        <begin position="151"/>
        <end position="154"/>
    </location>
</feature>
<feature type="compositionally biased region" description="Basic and acidic residues" evidence="2">
    <location>
        <begin position="458"/>
        <end position="506"/>
    </location>
</feature>
<feature type="compositionally biased region" description="Basic residues" evidence="2">
    <location>
        <begin position="518"/>
        <end position="528"/>
    </location>
</feature>
<feature type="binding site" evidence="1">
    <location>
        <begin position="46"/>
        <end position="53"/>
    </location>
    <ligand>
        <name>ATP</name>
        <dbReference type="ChEBI" id="CHEBI:30616"/>
    </ligand>
</feature>
<proteinExistence type="inferred from homology"/>
<reference key="1">
    <citation type="journal article" date="2006" name="J. Bacteriol.">
        <title>Pathogenomic sequence analysis of Bacillus cereus and Bacillus thuringiensis isolates closely related to Bacillus anthracis.</title>
        <authorList>
            <person name="Han C.S."/>
            <person name="Xie G."/>
            <person name="Challacombe J.F."/>
            <person name="Altherr M.R."/>
            <person name="Bhotika S.S."/>
            <person name="Bruce D."/>
            <person name="Campbell C.S."/>
            <person name="Campbell M.L."/>
            <person name="Chen J."/>
            <person name="Chertkov O."/>
            <person name="Cleland C."/>
            <person name="Dimitrijevic M."/>
            <person name="Doggett N.A."/>
            <person name="Fawcett J.J."/>
            <person name="Glavina T."/>
            <person name="Goodwin L.A."/>
            <person name="Hill K.K."/>
            <person name="Hitchcock P."/>
            <person name="Jackson P.J."/>
            <person name="Keim P."/>
            <person name="Kewalramani A.R."/>
            <person name="Longmire J."/>
            <person name="Lucas S."/>
            <person name="Malfatti S."/>
            <person name="McMurry K."/>
            <person name="Meincke L.J."/>
            <person name="Misra M."/>
            <person name="Moseman B.L."/>
            <person name="Mundt M."/>
            <person name="Munk A.C."/>
            <person name="Okinaka R.T."/>
            <person name="Parson-Quintana B."/>
            <person name="Reilly L.P."/>
            <person name="Richardson P."/>
            <person name="Robinson D.L."/>
            <person name="Rubin E."/>
            <person name="Saunders E."/>
            <person name="Tapia R."/>
            <person name="Tesmer J.G."/>
            <person name="Thayer N."/>
            <person name="Thompson L.S."/>
            <person name="Tice H."/>
            <person name="Ticknor L.O."/>
            <person name="Wills P.L."/>
            <person name="Brettin T.S."/>
            <person name="Gilna P."/>
        </authorList>
    </citation>
    <scope>NUCLEOTIDE SEQUENCE [LARGE SCALE GENOMIC DNA]</scope>
    <source>
        <strain>97-27</strain>
    </source>
</reference>
<accession>Q6HPE6</accession>